<protein>
    <recommendedName>
        <fullName>Autophagy-related protein 2</fullName>
    </recommendedName>
</protein>
<comment type="function">
    <text evidence="2">Lipid transfer protein required for autophagosome completion and peroxisome degradation. Tethers the edge of the isolation membrane (IM) to the endoplasmic reticulum (ER) and mediates direct lipid transfer from ER to IM for IM expansion. ATG2 binds to the ER exit site (ERES), which is the membrane source for autophagosome formation, using basic residues in its N-terminal region (NR) and to the expanding edge of the IM through its C-terminal region. The latter binding is assisted by an ATG18-PtdIns3P interaction. ATG2 then extracts phospholipids from the membrane source using its NR and transfers them to ATG9 to the IM through its predicted beta-sheet-rich structure for membrane expansion.</text>
</comment>
<comment type="catalytic activity">
    <reaction evidence="1">
        <text>a 1,2-diacyl-sn-glycero-3-phosphocholine(in) = a 1,2-diacyl-sn-glycero-3-phosphocholine(out)</text>
        <dbReference type="Rhea" id="RHEA:38571"/>
        <dbReference type="ChEBI" id="CHEBI:57643"/>
    </reaction>
</comment>
<comment type="catalytic activity">
    <reaction evidence="1">
        <text>a 1,2-diacyl-sn-glycero-3-phospho-L-serine(in) = a 1,2-diacyl-sn-glycero-3-phospho-L-serine(out)</text>
        <dbReference type="Rhea" id="RHEA:38663"/>
        <dbReference type="ChEBI" id="CHEBI:57262"/>
    </reaction>
</comment>
<comment type="catalytic activity">
    <reaction evidence="1">
        <text>a 1,2-diacyl-sn-glycero-3-phosphoethanolamine(in) = a 1,2-diacyl-sn-glycero-3-phosphoethanolamine(out)</text>
        <dbReference type="Rhea" id="RHEA:38895"/>
        <dbReference type="ChEBI" id="CHEBI:64612"/>
    </reaction>
</comment>
<comment type="subcellular location">
    <subcellularLocation>
        <location evidence="2">Preautophagosomal structure membrane</location>
        <topology evidence="2">Peripheral membrane protein</topology>
    </subcellularLocation>
    <subcellularLocation>
        <location evidence="2">Endoplasmic reticulum membrane</location>
        <topology evidence="2">Peripheral membrane protein</topology>
    </subcellularLocation>
</comment>
<comment type="similarity">
    <text evidence="4">Belongs to the ATG2 family.</text>
</comment>
<accession>Q6CQ43</accession>
<evidence type="ECO:0000250" key="1">
    <source>
        <dbReference type="UniProtKB" id="O94649"/>
    </source>
</evidence>
<evidence type="ECO:0000250" key="2">
    <source>
        <dbReference type="UniProtKB" id="P53855"/>
    </source>
</evidence>
<evidence type="ECO:0000256" key="3">
    <source>
        <dbReference type="SAM" id="MobiDB-lite"/>
    </source>
</evidence>
<evidence type="ECO:0000305" key="4"/>
<name>ATG2_KLULA</name>
<gene>
    <name type="primary">ATG2</name>
    <name type="ordered locus">KLLA0D19899g</name>
</gene>
<dbReference type="EMBL" id="CR382124">
    <property type="protein sequence ID" value="CAH01042.1"/>
    <property type="molecule type" value="Genomic_DNA"/>
</dbReference>
<dbReference type="RefSeq" id="XP_453946.1">
    <property type="nucleotide sequence ID" value="XM_453946.1"/>
</dbReference>
<dbReference type="FunCoup" id="Q6CQ43">
    <property type="interactions" value="57"/>
</dbReference>
<dbReference type="STRING" id="284590.Q6CQ43"/>
<dbReference type="PaxDb" id="284590-Q6CQ43"/>
<dbReference type="KEGG" id="kla:KLLA0_D19899g"/>
<dbReference type="eggNOG" id="KOG2993">
    <property type="taxonomic scope" value="Eukaryota"/>
</dbReference>
<dbReference type="HOGENOM" id="CLU_000626_3_0_1"/>
<dbReference type="InParanoid" id="Q6CQ43"/>
<dbReference type="OMA" id="YDWKYTR"/>
<dbReference type="Proteomes" id="UP000000598">
    <property type="component" value="Chromosome D"/>
</dbReference>
<dbReference type="GO" id="GO:0005789">
    <property type="term" value="C:endoplasmic reticulum membrane"/>
    <property type="evidence" value="ECO:0007669"/>
    <property type="project" value="UniProtKB-SubCell"/>
</dbReference>
<dbReference type="GO" id="GO:0061908">
    <property type="term" value="C:phagophore"/>
    <property type="evidence" value="ECO:0007669"/>
    <property type="project" value="TreeGrafter"/>
</dbReference>
<dbReference type="GO" id="GO:0034045">
    <property type="term" value="C:phagophore assembly site membrane"/>
    <property type="evidence" value="ECO:0007669"/>
    <property type="project" value="UniProtKB-SubCell"/>
</dbReference>
<dbReference type="GO" id="GO:0032266">
    <property type="term" value="F:phosphatidylinositol-3-phosphate binding"/>
    <property type="evidence" value="ECO:0007669"/>
    <property type="project" value="TreeGrafter"/>
</dbReference>
<dbReference type="GO" id="GO:0043495">
    <property type="term" value="F:protein-membrane adaptor activity"/>
    <property type="evidence" value="ECO:0007669"/>
    <property type="project" value="TreeGrafter"/>
</dbReference>
<dbReference type="GO" id="GO:0000045">
    <property type="term" value="P:autophagosome assembly"/>
    <property type="evidence" value="ECO:0007669"/>
    <property type="project" value="TreeGrafter"/>
</dbReference>
<dbReference type="GO" id="GO:0000422">
    <property type="term" value="P:autophagy of mitochondrion"/>
    <property type="evidence" value="ECO:0007669"/>
    <property type="project" value="TreeGrafter"/>
</dbReference>
<dbReference type="GO" id="GO:0061723">
    <property type="term" value="P:glycophagy"/>
    <property type="evidence" value="ECO:0007669"/>
    <property type="project" value="TreeGrafter"/>
</dbReference>
<dbReference type="GO" id="GO:0006869">
    <property type="term" value="P:lipid transport"/>
    <property type="evidence" value="ECO:0007669"/>
    <property type="project" value="UniProtKB-KW"/>
</dbReference>
<dbReference type="GO" id="GO:0034727">
    <property type="term" value="P:piecemeal microautophagy of the nucleus"/>
    <property type="evidence" value="ECO:0007669"/>
    <property type="project" value="TreeGrafter"/>
</dbReference>
<dbReference type="GO" id="GO:0015031">
    <property type="term" value="P:protein transport"/>
    <property type="evidence" value="ECO:0007669"/>
    <property type="project" value="UniProtKB-KW"/>
</dbReference>
<dbReference type="GO" id="GO:0061709">
    <property type="term" value="P:reticulophagy"/>
    <property type="evidence" value="ECO:0007669"/>
    <property type="project" value="TreeGrafter"/>
</dbReference>
<dbReference type="InterPro" id="IPR026849">
    <property type="entry name" value="ATG2"/>
</dbReference>
<dbReference type="PANTHER" id="PTHR13190">
    <property type="entry name" value="AUTOPHAGY-RELATED 2, ISOFORM A"/>
    <property type="match status" value="1"/>
</dbReference>
<dbReference type="PANTHER" id="PTHR13190:SF1">
    <property type="entry name" value="AUTOPHAGY-RELATED 2, ISOFORM A"/>
    <property type="match status" value="1"/>
</dbReference>
<dbReference type="Pfam" id="PF13329">
    <property type="entry name" value="ATG2_CAD"/>
    <property type="match status" value="1"/>
</dbReference>
<proteinExistence type="inferred from homology"/>
<keyword id="KW-0072">Autophagy</keyword>
<keyword id="KW-0256">Endoplasmic reticulum</keyword>
<keyword id="KW-0445">Lipid transport</keyword>
<keyword id="KW-0472">Membrane</keyword>
<keyword id="KW-0653">Protein transport</keyword>
<keyword id="KW-1185">Reference proteome</keyword>
<keyword id="KW-0813">Transport</keyword>
<feature type="chain" id="PRO_0000215832" description="Autophagy-related protein 2">
    <location>
        <begin position="1"/>
        <end position="1502"/>
    </location>
</feature>
<feature type="region of interest" description="Disordered" evidence="3">
    <location>
        <begin position="211"/>
        <end position="234"/>
    </location>
</feature>
<feature type="compositionally biased region" description="Polar residues" evidence="3">
    <location>
        <begin position="211"/>
        <end position="222"/>
    </location>
</feature>
<feature type="compositionally biased region" description="Acidic residues" evidence="3">
    <location>
        <begin position="223"/>
        <end position="234"/>
    </location>
</feature>
<sequence>MSSWLPQNVQKRLLLYVLQQVSLFSNVDLTNLDVSLGSQSQFSFNDIDLNVKEIKLPNVDVLSGKIEKLNLQLAVAGNVDISGEGLTFVLKPIDRFFEDDLSDQWASSLTKSVIDMTKSIMESDVTDSSEHSVEALEEVSKSPTALDSMRNKVLQMALGKLSLKMKRIEFQFLLSTEVTLKFTIDTITLLTVDNKRTVDMGGIEVAFSKTQLSPTNSHQNTDSDVEENENTDSEDAMTASITYSKLEATSIYLSAMESLILESSDDAVQVVLTIDKVNIQFQGVTSINDLKVRDVIIRIDEINIYLRKISPIRKHLLSILRASLDKTSSDGTRTENMRNYKRFQQEQNIKEEEVLTAILLKKVSLHLLDDLELNLIDISLKKSEGFTTSASVFDLKLLYMSNEYFFSSPSAQPLFSMQPDQTTAEKKMFLNRDITLNVDSVLLNELLKLVEEYGSAYNYIQKITRASANQKTAEVLHFKSQSINLKILMNNISLELSMDPIKSTLPHTLFDVEKISLLLIRGDKKVLIGTLSNLIISSKTNGCFHVESFDHKFGAIDINTRTKAVLESLHLFLSQAELELISSNLIAFCGSISSFTNPNTRNNGHENVTKKSVRLLHSSNVMNKRATLSNFVLQVHKAKMTITNTLENTFGDITIEAISCILSQDQNKTLCGIVKEARLQRLYMREKTDIICNVNHDRSKPQLILNMPNSGKPKLYLKGLGLFIDSKWRDLVPSSSKGDIKQERKLTFRTMEVRLYDCSLSLKPYRICTGMVISIPKSIINFSPLGITVSLRSLETLLIDDMKVLKERNTKVLENISLSTWYQKQGYSPLIKVDVLSLHFSNTDSMAVSLKVQKVDVSVCSDSLNALMQTALDLKPAETYPDTLKYQIEPEAVDIFNELCEDFFVTKENPNDKTEDDYETPPVSQGSVNFEEEHFSTERRTVVENDSKSSVFSILTTIKIHIEEVKLKLYDGYEWRHTRKEIKSAVDRIQEDFNDGLELSETKVFDSIYIPAPKDTVENIKDNINRKIHNEETNEGKMKLRPTKKYKVLIKGRDLCIEFKGGQDKIAERASSLSSINDYCILNNTFVKVSDLEIIDNLPTSTWNKFLTRSRSNDKMAQEPAMLVIECSLIRPVPHLYATELICNINIVPLTLHVDQDTLEFLTLFFQFKDNRFELLDEYPDILYIQRLEINSVRLLLDYKPKKVDYAGLKSGKTKEFMNFFILDEARIKLKHVILYGVNGFPQLETILSDIWTPDITKTQIPGILSALTPLKPLAGLSYGARALISVPTEHYQQNGRFGGSLQNGGMVFLKTTGGEVIKLAVRLTSGTQTILENTEKLLGGQGITGRNVPITLVEGDEKVDALIDESLLRSTALFNKEPDNKSNHLDVLLADGNHQKVLSLYADQPKDFNSGLQDAYESMERNLYLTFDSMKKAKKELKTAKGAQEAVSTVAKAAPFVLIRPLIGVTEALSKTLQGLNNQYDEDRIAQIEEKYKSKKQNNNQ</sequence>
<organism>
    <name type="scientific">Kluyveromyces lactis (strain ATCC 8585 / CBS 2359 / DSM 70799 / NBRC 1267 / NRRL Y-1140 / WM37)</name>
    <name type="common">Yeast</name>
    <name type="synonym">Candida sphaerica</name>
    <dbReference type="NCBI Taxonomy" id="284590"/>
    <lineage>
        <taxon>Eukaryota</taxon>
        <taxon>Fungi</taxon>
        <taxon>Dikarya</taxon>
        <taxon>Ascomycota</taxon>
        <taxon>Saccharomycotina</taxon>
        <taxon>Saccharomycetes</taxon>
        <taxon>Saccharomycetales</taxon>
        <taxon>Saccharomycetaceae</taxon>
        <taxon>Kluyveromyces</taxon>
    </lineage>
</organism>
<reference key="1">
    <citation type="journal article" date="2004" name="Nature">
        <title>Genome evolution in yeasts.</title>
        <authorList>
            <person name="Dujon B."/>
            <person name="Sherman D."/>
            <person name="Fischer G."/>
            <person name="Durrens P."/>
            <person name="Casaregola S."/>
            <person name="Lafontaine I."/>
            <person name="de Montigny J."/>
            <person name="Marck C."/>
            <person name="Neuveglise C."/>
            <person name="Talla E."/>
            <person name="Goffard N."/>
            <person name="Frangeul L."/>
            <person name="Aigle M."/>
            <person name="Anthouard V."/>
            <person name="Babour A."/>
            <person name="Barbe V."/>
            <person name="Barnay S."/>
            <person name="Blanchin S."/>
            <person name="Beckerich J.-M."/>
            <person name="Beyne E."/>
            <person name="Bleykasten C."/>
            <person name="Boisrame A."/>
            <person name="Boyer J."/>
            <person name="Cattolico L."/>
            <person name="Confanioleri F."/>
            <person name="de Daruvar A."/>
            <person name="Despons L."/>
            <person name="Fabre E."/>
            <person name="Fairhead C."/>
            <person name="Ferry-Dumazet H."/>
            <person name="Groppi A."/>
            <person name="Hantraye F."/>
            <person name="Hennequin C."/>
            <person name="Jauniaux N."/>
            <person name="Joyet P."/>
            <person name="Kachouri R."/>
            <person name="Kerrest A."/>
            <person name="Koszul R."/>
            <person name="Lemaire M."/>
            <person name="Lesur I."/>
            <person name="Ma L."/>
            <person name="Muller H."/>
            <person name="Nicaud J.-M."/>
            <person name="Nikolski M."/>
            <person name="Oztas S."/>
            <person name="Ozier-Kalogeropoulos O."/>
            <person name="Pellenz S."/>
            <person name="Potier S."/>
            <person name="Richard G.-F."/>
            <person name="Straub M.-L."/>
            <person name="Suleau A."/>
            <person name="Swennen D."/>
            <person name="Tekaia F."/>
            <person name="Wesolowski-Louvel M."/>
            <person name="Westhof E."/>
            <person name="Wirth B."/>
            <person name="Zeniou-Meyer M."/>
            <person name="Zivanovic Y."/>
            <person name="Bolotin-Fukuhara M."/>
            <person name="Thierry A."/>
            <person name="Bouchier C."/>
            <person name="Caudron B."/>
            <person name="Scarpelli C."/>
            <person name="Gaillardin C."/>
            <person name="Weissenbach J."/>
            <person name="Wincker P."/>
            <person name="Souciet J.-L."/>
        </authorList>
    </citation>
    <scope>NUCLEOTIDE SEQUENCE [LARGE SCALE GENOMIC DNA]</scope>
    <source>
        <strain>ATCC 8585 / CBS 2359 / DSM 70799 / NBRC 1267 / NRRL Y-1140 / WM37</strain>
    </source>
</reference>